<accession>Q2A3K7</accession>
<keyword id="KW-0520">NAD</keyword>
<keyword id="KW-0560">Oxidoreductase</keyword>
<keyword id="KW-1185">Reference proteome</keyword>
<keyword id="KW-0816">Tricarboxylic acid cycle</keyword>
<organism>
    <name type="scientific">Francisella tularensis subsp. holarctica (strain LVS)</name>
    <dbReference type="NCBI Taxonomy" id="376619"/>
    <lineage>
        <taxon>Bacteria</taxon>
        <taxon>Pseudomonadati</taxon>
        <taxon>Pseudomonadota</taxon>
        <taxon>Gammaproteobacteria</taxon>
        <taxon>Thiotrichales</taxon>
        <taxon>Francisellaceae</taxon>
        <taxon>Francisella</taxon>
    </lineage>
</organism>
<proteinExistence type="inferred from homology"/>
<reference key="1">
    <citation type="submission" date="2006-03" db="EMBL/GenBank/DDBJ databases">
        <title>Complete genome sequence of Francisella tularensis LVS (Live Vaccine Strain).</title>
        <authorList>
            <person name="Chain P."/>
            <person name="Larimer F."/>
            <person name="Land M."/>
            <person name="Stilwagen S."/>
            <person name="Larsson P."/>
            <person name="Bearden S."/>
            <person name="Chu M."/>
            <person name="Oyston P."/>
            <person name="Forsman M."/>
            <person name="Andersson S."/>
            <person name="Lindler L."/>
            <person name="Titball R."/>
            <person name="Garcia E."/>
        </authorList>
    </citation>
    <scope>NUCLEOTIDE SEQUENCE [LARGE SCALE GENOMIC DNA]</scope>
    <source>
        <strain>LVS</strain>
    </source>
</reference>
<evidence type="ECO:0000255" key="1">
    <source>
        <dbReference type="HAMAP-Rule" id="MF_00487"/>
    </source>
</evidence>
<sequence>MARKKITLVGAGNIGGTLAHLALIKQLGDVVLFDIAQGMPNGKALDLLQTCPIEGVDFKVRGTNDYKDLENSDVVIVTAGVPRKPGMSRDDLLGINIKVMQTVGEGIKHNCPNAFVICITNPLDIMVNMLQKFSGVPDNKIVGMAGVLDSARFRTFLADELNVSVQQVQAYVMGGHGDTMVPLTKMSNVAGVSLEQLVKEGKLKQERLDAIVSRTRSGGGEIVALLKTGSAYYAPAAAGIQMAESFLKDKKMILPCAAKVKAGMYGLDEDLFVGVPTEISANGVRPIEVEISDKEREQLQVSINAVKDLNKAAAEILAK</sequence>
<feature type="chain" id="PRO_1000026472" description="Malate dehydrogenase">
    <location>
        <begin position="1"/>
        <end position="319"/>
    </location>
</feature>
<feature type="active site" description="Proton acceptor" evidence="1">
    <location>
        <position position="176"/>
    </location>
</feature>
<feature type="binding site" evidence="1">
    <location>
        <begin position="10"/>
        <end position="15"/>
    </location>
    <ligand>
        <name>NAD(+)</name>
        <dbReference type="ChEBI" id="CHEBI:57540"/>
    </ligand>
</feature>
<feature type="binding site" evidence="1">
    <location>
        <position position="34"/>
    </location>
    <ligand>
        <name>NAD(+)</name>
        <dbReference type="ChEBI" id="CHEBI:57540"/>
    </ligand>
</feature>
<feature type="binding site" evidence="1">
    <location>
        <position position="83"/>
    </location>
    <ligand>
        <name>substrate</name>
    </ligand>
</feature>
<feature type="binding site" evidence="1">
    <location>
        <position position="89"/>
    </location>
    <ligand>
        <name>substrate</name>
    </ligand>
</feature>
<feature type="binding site" evidence="1">
    <location>
        <position position="96"/>
    </location>
    <ligand>
        <name>NAD(+)</name>
        <dbReference type="ChEBI" id="CHEBI:57540"/>
    </ligand>
</feature>
<feature type="binding site" evidence="1">
    <location>
        <begin position="119"/>
        <end position="121"/>
    </location>
    <ligand>
        <name>NAD(+)</name>
        <dbReference type="ChEBI" id="CHEBI:57540"/>
    </ligand>
</feature>
<feature type="binding site" evidence="1">
    <location>
        <position position="121"/>
    </location>
    <ligand>
        <name>substrate</name>
    </ligand>
</feature>
<feature type="binding site" evidence="1">
    <location>
        <position position="152"/>
    </location>
    <ligand>
        <name>substrate</name>
    </ligand>
</feature>
<gene>
    <name evidence="1" type="primary">mdh</name>
    <name type="ordered locus">FTL_0987</name>
</gene>
<dbReference type="EC" id="1.1.1.37" evidence="1"/>
<dbReference type="EMBL" id="AM233362">
    <property type="protein sequence ID" value="CAJ79426.1"/>
    <property type="molecule type" value="Genomic_DNA"/>
</dbReference>
<dbReference type="RefSeq" id="WP_010030432.1">
    <property type="nucleotide sequence ID" value="NZ_CP009694.1"/>
</dbReference>
<dbReference type="SMR" id="Q2A3K7"/>
<dbReference type="KEGG" id="ftl:FTL_0987"/>
<dbReference type="Proteomes" id="UP000001944">
    <property type="component" value="Chromosome"/>
</dbReference>
<dbReference type="GO" id="GO:0004459">
    <property type="term" value="F:L-lactate dehydrogenase activity"/>
    <property type="evidence" value="ECO:0007669"/>
    <property type="project" value="TreeGrafter"/>
</dbReference>
<dbReference type="GO" id="GO:0030060">
    <property type="term" value="F:L-malate dehydrogenase (NAD+) activity"/>
    <property type="evidence" value="ECO:0007669"/>
    <property type="project" value="UniProtKB-UniRule"/>
</dbReference>
<dbReference type="GO" id="GO:0006089">
    <property type="term" value="P:lactate metabolic process"/>
    <property type="evidence" value="ECO:0007669"/>
    <property type="project" value="TreeGrafter"/>
</dbReference>
<dbReference type="GO" id="GO:0006099">
    <property type="term" value="P:tricarboxylic acid cycle"/>
    <property type="evidence" value="ECO:0007669"/>
    <property type="project" value="UniProtKB-UniRule"/>
</dbReference>
<dbReference type="CDD" id="cd01339">
    <property type="entry name" value="LDH-like_MDH"/>
    <property type="match status" value="1"/>
</dbReference>
<dbReference type="FunFam" id="3.40.50.720:FF:000018">
    <property type="entry name" value="Malate dehydrogenase"/>
    <property type="match status" value="1"/>
</dbReference>
<dbReference type="FunFam" id="3.90.110.10:FF:000004">
    <property type="entry name" value="Malate dehydrogenase"/>
    <property type="match status" value="1"/>
</dbReference>
<dbReference type="Gene3D" id="3.90.110.10">
    <property type="entry name" value="Lactate dehydrogenase/glycoside hydrolase, family 4, C-terminal"/>
    <property type="match status" value="1"/>
</dbReference>
<dbReference type="Gene3D" id="3.40.50.720">
    <property type="entry name" value="NAD(P)-binding Rossmann-like Domain"/>
    <property type="match status" value="1"/>
</dbReference>
<dbReference type="HAMAP" id="MF_00487">
    <property type="entry name" value="Malate_dehydrog_3"/>
    <property type="match status" value="1"/>
</dbReference>
<dbReference type="InterPro" id="IPR001557">
    <property type="entry name" value="L-lactate/malate_DH"/>
</dbReference>
<dbReference type="InterPro" id="IPR022383">
    <property type="entry name" value="Lactate/malate_DH_C"/>
</dbReference>
<dbReference type="InterPro" id="IPR001236">
    <property type="entry name" value="Lactate/malate_DH_N"/>
</dbReference>
<dbReference type="InterPro" id="IPR015955">
    <property type="entry name" value="Lactate_DH/Glyco_Ohase_4_C"/>
</dbReference>
<dbReference type="InterPro" id="IPR011275">
    <property type="entry name" value="Malate_DH_type3"/>
</dbReference>
<dbReference type="InterPro" id="IPR036291">
    <property type="entry name" value="NAD(P)-bd_dom_sf"/>
</dbReference>
<dbReference type="NCBIfam" id="TIGR01763">
    <property type="entry name" value="MalateDH_bact"/>
    <property type="match status" value="1"/>
</dbReference>
<dbReference type="NCBIfam" id="NF004863">
    <property type="entry name" value="PRK06223.1"/>
    <property type="match status" value="1"/>
</dbReference>
<dbReference type="PANTHER" id="PTHR43128">
    <property type="entry name" value="L-2-HYDROXYCARBOXYLATE DEHYDROGENASE (NAD(P)(+))"/>
    <property type="match status" value="1"/>
</dbReference>
<dbReference type="PANTHER" id="PTHR43128:SF16">
    <property type="entry name" value="L-LACTATE DEHYDROGENASE"/>
    <property type="match status" value="1"/>
</dbReference>
<dbReference type="Pfam" id="PF02866">
    <property type="entry name" value="Ldh_1_C"/>
    <property type="match status" value="1"/>
</dbReference>
<dbReference type="Pfam" id="PF00056">
    <property type="entry name" value="Ldh_1_N"/>
    <property type="match status" value="1"/>
</dbReference>
<dbReference type="PIRSF" id="PIRSF000102">
    <property type="entry name" value="Lac_mal_DH"/>
    <property type="match status" value="1"/>
</dbReference>
<dbReference type="PRINTS" id="PR00086">
    <property type="entry name" value="LLDHDRGNASE"/>
</dbReference>
<dbReference type="SUPFAM" id="SSF56327">
    <property type="entry name" value="LDH C-terminal domain-like"/>
    <property type="match status" value="1"/>
</dbReference>
<dbReference type="SUPFAM" id="SSF51735">
    <property type="entry name" value="NAD(P)-binding Rossmann-fold domains"/>
    <property type="match status" value="1"/>
</dbReference>
<comment type="function">
    <text evidence="1">Catalyzes the reversible oxidation of malate to oxaloacetate.</text>
</comment>
<comment type="catalytic activity">
    <reaction evidence="1">
        <text>(S)-malate + NAD(+) = oxaloacetate + NADH + H(+)</text>
        <dbReference type="Rhea" id="RHEA:21432"/>
        <dbReference type="ChEBI" id="CHEBI:15378"/>
        <dbReference type="ChEBI" id="CHEBI:15589"/>
        <dbReference type="ChEBI" id="CHEBI:16452"/>
        <dbReference type="ChEBI" id="CHEBI:57540"/>
        <dbReference type="ChEBI" id="CHEBI:57945"/>
        <dbReference type="EC" id="1.1.1.37"/>
    </reaction>
</comment>
<comment type="similarity">
    <text evidence="1">Belongs to the LDH/MDH superfamily. MDH type 3 family.</text>
</comment>
<name>MDH_FRATH</name>
<protein>
    <recommendedName>
        <fullName evidence="1">Malate dehydrogenase</fullName>
        <ecNumber evidence="1">1.1.1.37</ecNumber>
    </recommendedName>
</protein>